<name>UPP_BIFAA</name>
<evidence type="ECO:0000255" key="1">
    <source>
        <dbReference type="HAMAP-Rule" id="MF_01218"/>
    </source>
</evidence>
<protein>
    <recommendedName>
        <fullName evidence="1">Uracil phosphoribosyltransferase</fullName>
        <ecNumber evidence="1">2.4.2.9</ecNumber>
    </recommendedName>
    <alternativeName>
        <fullName evidence="1">UMP pyrophosphorylase</fullName>
    </alternativeName>
    <alternativeName>
        <fullName evidence="1">UPRTase</fullName>
    </alternativeName>
</protein>
<sequence length="213" mass="23218">MDIHVLNHPLVDHKLTVLRDKNTPSSTFRELVSELVMLEAYEATRDIEVVDKPIETPVAPMIGKHIAAPAPIIVPVLRAGLGMLDGMTKMIPSAEVGFLGMKRDEENPTQQITYANRLPEDLTGRQCFLIDPMLATGGTLVAATHYLAERGAKDITAVCILGAPEGLKFVEENLDPSIKFKLVLCAVDEKLNDKCYIVPGLGDAGDRLYGVID</sequence>
<comment type="function">
    <text evidence="1">Catalyzes the conversion of uracil and 5-phospho-alpha-D-ribose 1-diphosphate (PRPP) to UMP and diphosphate.</text>
</comment>
<comment type="catalytic activity">
    <reaction evidence="1">
        <text>UMP + diphosphate = 5-phospho-alpha-D-ribose 1-diphosphate + uracil</text>
        <dbReference type="Rhea" id="RHEA:13017"/>
        <dbReference type="ChEBI" id="CHEBI:17568"/>
        <dbReference type="ChEBI" id="CHEBI:33019"/>
        <dbReference type="ChEBI" id="CHEBI:57865"/>
        <dbReference type="ChEBI" id="CHEBI:58017"/>
        <dbReference type="EC" id="2.4.2.9"/>
    </reaction>
</comment>
<comment type="cofactor">
    <cofactor evidence="1">
        <name>Mg(2+)</name>
        <dbReference type="ChEBI" id="CHEBI:18420"/>
    </cofactor>
    <text evidence="1">Binds 1 Mg(2+) ion per subunit. The magnesium is bound as Mg-PRPP.</text>
</comment>
<comment type="activity regulation">
    <text evidence="1">Allosterically activated by GTP.</text>
</comment>
<comment type="pathway">
    <text evidence="1">Pyrimidine metabolism; UMP biosynthesis via salvage pathway; UMP from uracil: step 1/1.</text>
</comment>
<comment type="similarity">
    <text evidence="1">Belongs to the UPRTase family.</text>
</comment>
<dbReference type="EC" id="2.4.2.9" evidence="1"/>
<dbReference type="EMBL" id="AP009256">
    <property type="protein sequence ID" value="BAF38905.1"/>
    <property type="molecule type" value="Genomic_DNA"/>
</dbReference>
<dbReference type="RefSeq" id="WP_003807463.1">
    <property type="nucleotide sequence ID" value="NZ_CAXVNC010000001.1"/>
</dbReference>
<dbReference type="SMR" id="A0ZZM2"/>
<dbReference type="STRING" id="367928.BAD_0124"/>
<dbReference type="PaxDb" id="1680-BADO_0134"/>
<dbReference type="GeneID" id="4556737"/>
<dbReference type="KEGG" id="bad:BAD_0124"/>
<dbReference type="HOGENOM" id="CLU_067096_2_3_11"/>
<dbReference type="UniPathway" id="UPA00574">
    <property type="reaction ID" value="UER00636"/>
</dbReference>
<dbReference type="Proteomes" id="UP000008702">
    <property type="component" value="Chromosome"/>
</dbReference>
<dbReference type="GO" id="GO:0005525">
    <property type="term" value="F:GTP binding"/>
    <property type="evidence" value="ECO:0007669"/>
    <property type="project" value="UniProtKB-KW"/>
</dbReference>
<dbReference type="GO" id="GO:0000287">
    <property type="term" value="F:magnesium ion binding"/>
    <property type="evidence" value="ECO:0007669"/>
    <property type="project" value="UniProtKB-UniRule"/>
</dbReference>
<dbReference type="GO" id="GO:0004845">
    <property type="term" value="F:uracil phosphoribosyltransferase activity"/>
    <property type="evidence" value="ECO:0007669"/>
    <property type="project" value="UniProtKB-UniRule"/>
</dbReference>
<dbReference type="GO" id="GO:0044206">
    <property type="term" value="P:UMP salvage"/>
    <property type="evidence" value="ECO:0007669"/>
    <property type="project" value="UniProtKB-UniRule"/>
</dbReference>
<dbReference type="GO" id="GO:0006223">
    <property type="term" value="P:uracil salvage"/>
    <property type="evidence" value="ECO:0007669"/>
    <property type="project" value="InterPro"/>
</dbReference>
<dbReference type="CDD" id="cd06223">
    <property type="entry name" value="PRTases_typeI"/>
    <property type="match status" value="1"/>
</dbReference>
<dbReference type="FunFam" id="3.40.50.2020:FF:000003">
    <property type="entry name" value="Uracil phosphoribosyltransferase"/>
    <property type="match status" value="1"/>
</dbReference>
<dbReference type="Gene3D" id="3.40.50.2020">
    <property type="match status" value="1"/>
</dbReference>
<dbReference type="HAMAP" id="MF_01218_B">
    <property type="entry name" value="Upp_B"/>
    <property type="match status" value="1"/>
</dbReference>
<dbReference type="InterPro" id="IPR000836">
    <property type="entry name" value="PRibTrfase_dom"/>
</dbReference>
<dbReference type="InterPro" id="IPR029057">
    <property type="entry name" value="PRTase-like"/>
</dbReference>
<dbReference type="InterPro" id="IPR034332">
    <property type="entry name" value="Upp_B"/>
</dbReference>
<dbReference type="InterPro" id="IPR050054">
    <property type="entry name" value="UPRTase/APRTase"/>
</dbReference>
<dbReference type="InterPro" id="IPR005765">
    <property type="entry name" value="Ura_phspho_trans"/>
</dbReference>
<dbReference type="NCBIfam" id="NF001097">
    <property type="entry name" value="PRK00129.1"/>
    <property type="match status" value="1"/>
</dbReference>
<dbReference type="NCBIfam" id="TIGR01091">
    <property type="entry name" value="upp"/>
    <property type="match status" value="1"/>
</dbReference>
<dbReference type="PANTHER" id="PTHR32315">
    <property type="entry name" value="ADENINE PHOSPHORIBOSYLTRANSFERASE"/>
    <property type="match status" value="1"/>
</dbReference>
<dbReference type="PANTHER" id="PTHR32315:SF4">
    <property type="entry name" value="URACIL PHOSPHORIBOSYLTRANSFERASE, CHLOROPLASTIC"/>
    <property type="match status" value="1"/>
</dbReference>
<dbReference type="Pfam" id="PF14681">
    <property type="entry name" value="UPRTase"/>
    <property type="match status" value="1"/>
</dbReference>
<dbReference type="SUPFAM" id="SSF53271">
    <property type="entry name" value="PRTase-like"/>
    <property type="match status" value="1"/>
</dbReference>
<keyword id="KW-0021">Allosteric enzyme</keyword>
<keyword id="KW-0328">Glycosyltransferase</keyword>
<keyword id="KW-0342">GTP-binding</keyword>
<keyword id="KW-0460">Magnesium</keyword>
<keyword id="KW-0547">Nucleotide-binding</keyword>
<keyword id="KW-1185">Reference proteome</keyword>
<keyword id="KW-0808">Transferase</keyword>
<reference key="1">
    <citation type="submission" date="2006-12" db="EMBL/GenBank/DDBJ databases">
        <title>Bifidobacterium adolescentis complete genome sequence.</title>
        <authorList>
            <person name="Suzuki T."/>
            <person name="Tsuda Y."/>
            <person name="Kanou N."/>
            <person name="Inoue T."/>
            <person name="Kumazaki K."/>
            <person name="Nagano S."/>
            <person name="Hirai S."/>
            <person name="Tanaka K."/>
            <person name="Watanabe K."/>
        </authorList>
    </citation>
    <scope>NUCLEOTIDE SEQUENCE [LARGE SCALE GENOMIC DNA]</scope>
    <source>
        <strain>ATCC 15703 / DSM 20083 / NCTC 11814 / E194a</strain>
    </source>
</reference>
<organism>
    <name type="scientific">Bifidobacterium adolescentis (strain ATCC 15703 / DSM 20083 / NCTC 11814 / E194a)</name>
    <dbReference type="NCBI Taxonomy" id="367928"/>
    <lineage>
        <taxon>Bacteria</taxon>
        <taxon>Bacillati</taxon>
        <taxon>Actinomycetota</taxon>
        <taxon>Actinomycetes</taxon>
        <taxon>Bifidobacteriales</taxon>
        <taxon>Bifidobacteriaceae</taxon>
        <taxon>Bifidobacterium</taxon>
    </lineage>
</organism>
<accession>A0ZZM2</accession>
<gene>
    <name evidence="1" type="primary">upp</name>
    <name type="ordered locus">BAD_0124</name>
</gene>
<proteinExistence type="inferred from homology"/>
<feature type="chain" id="PRO_1000053678" description="Uracil phosphoribosyltransferase">
    <location>
        <begin position="1"/>
        <end position="213"/>
    </location>
</feature>
<feature type="binding site" evidence="1">
    <location>
        <position position="78"/>
    </location>
    <ligand>
        <name>5-phospho-alpha-D-ribose 1-diphosphate</name>
        <dbReference type="ChEBI" id="CHEBI:58017"/>
    </ligand>
</feature>
<feature type="binding site" evidence="1">
    <location>
        <position position="103"/>
    </location>
    <ligand>
        <name>5-phospho-alpha-D-ribose 1-diphosphate</name>
        <dbReference type="ChEBI" id="CHEBI:58017"/>
    </ligand>
</feature>
<feature type="binding site" evidence="1">
    <location>
        <begin position="131"/>
        <end position="139"/>
    </location>
    <ligand>
        <name>5-phospho-alpha-D-ribose 1-diphosphate</name>
        <dbReference type="ChEBI" id="CHEBI:58017"/>
    </ligand>
</feature>
<feature type="binding site" evidence="1">
    <location>
        <position position="197"/>
    </location>
    <ligand>
        <name>uracil</name>
        <dbReference type="ChEBI" id="CHEBI:17568"/>
    </ligand>
</feature>
<feature type="binding site" evidence="1">
    <location>
        <begin position="202"/>
        <end position="204"/>
    </location>
    <ligand>
        <name>uracil</name>
        <dbReference type="ChEBI" id="CHEBI:17568"/>
    </ligand>
</feature>
<feature type="binding site" evidence="1">
    <location>
        <position position="203"/>
    </location>
    <ligand>
        <name>5-phospho-alpha-D-ribose 1-diphosphate</name>
        <dbReference type="ChEBI" id="CHEBI:58017"/>
    </ligand>
</feature>